<protein>
    <recommendedName>
        <fullName evidence="6">NAD(+)--protein-arginine ADP-ribosyltransferase Tre1</fullName>
        <ecNumber evidence="7">2.4.2.31</ecNumber>
    </recommendedName>
    <alternativeName>
        <fullName evidence="5">Effector protein Tre1</fullName>
        <shortName evidence="5">Tre1-Pp</shortName>
    </alternativeName>
    <alternativeName>
        <fullName evidence="6">NAD(+)--protein-arginine ADP-ribosyltransferase</fullName>
    </alternativeName>
</protein>
<gene>
    <name evidence="5" type="primary">tre1</name>
    <name type="ordered locus">PputGB1_2762</name>
</gene>
<feature type="chain" id="PRO_0000446516" description="NAD(+)--protein-arginine ADP-ribosyltransferase Tre1">
    <location>
        <begin position="1"/>
        <end position="495"/>
    </location>
</feature>
<feature type="domain" description="TR mART core" evidence="2">
    <location>
        <begin position="315"/>
        <end position="495"/>
    </location>
</feature>
<feature type="region of interest" description="Disordered" evidence="3">
    <location>
        <begin position="278"/>
        <end position="309"/>
    </location>
</feature>
<feature type="region of interest" description="ART domain" evidence="7">
    <location>
        <begin position="344"/>
        <end position="495"/>
    </location>
</feature>
<feature type="active site" evidence="2">
    <location>
        <position position="406"/>
    </location>
</feature>
<feature type="active site" evidence="2">
    <location>
        <position position="431"/>
    </location>
</feature>
<feature type="active site" evidence="2">
    <location>
        <position position="466"/>
    </location>
</feature>
<evidence type="ECO:0000250" key="1">
    <source>
        <dbReference type="UniProtKB" id="A8GG78"/>
    </source>
</evidence>
<evidence type="ECO:0000255" key="2">
    <source>
        <dbReference type="PROSITE-ProRule" id="PRU01340"/>
    </source>
</evidence>
<evidence type="ECO:0000256" key="3">
    <source>
        <dbReference type="SAM" id="MobiDB-lite"/>
    </source>
</evidence>
<evidence type="ECO:0000269" key="4">
    <source>
    </source>
</evidence>
<evidence type="ECO:0000303" key="5">
    <source>
    </source>
</evidence>
<evidence type="ECO:0000305" key="6"/>
<evidence type="ECO:0000305" key="7">
    <source>
    </source>
</evidence>
<name>TRE1_PSEPG</name>
<dbReference type="EC" id="2.4.2.31" evidence="7"/>
<dbReference type="EMBL" id="CP000926">
    <property type="protein sequence ID" value="ABY98656.1"/>
    <property type="molecule type" value="Genomic_DNA"/>
</dbReference>
<dbReference type="RefSeq" id="WP_012272395.1">
    <property type="nucleotide sequence ID" value="NC_010322.1"/>
</dbReference>
<dbReference type="SMR" id="B0KTG9"/>
<dbReference type="KEGG" id="ppg:PputGB1_2762"/>
<dbReference type="eggNOG" id="COG2369">
    <property type="taxonomic scope" value="Bacteria"/>
</dbReference>
<dbReference type="HOGENOM" id="CLU_550787_0_0_6"/>
<dbReference type="Proteomes" id="UP000002157">
    <property type="component" value="Chromosome"/>
</dbReference>
<dbReference type="GO" id="GO:0005576">
    <property type="term" value="C:extracellular region"/>
    <property type="evidence" value="ECO:0007669"/>
    <property type="project" value="UniProtKB-SubCell"/>
</dbReference>
<dbReference type="GO" id="GO:0030430">
    <property type="term" value="C:host cell cytoplasm"/>
    <property type="evidence" value="ECO:0007669"/>
    <property type="project" value="UniProtKB-SubCell"/>
</dbReference>
<dbReference type="GO" id="GO:0106274">
    <property type="term" value="F:NAD+-protein-arginine ADP-ribosyltransferase activity"/>
    <property type="evidence" value="ECO:0007669"/>
    <property type="project" value="UniProtKB-EC"/>
</dbReference>
<dbReference type="GO" id="GO:0016779">
    <property type="term" value="F:nucleotidyltransferase activity"/>
    <property type="evidence" value="ECO:0007669"/>
    <property type="project" value="UniProtKB-KW"/>
</dbReference>
<dbReference type="GO" id="GO:0090729">
    <property type="term" value="F:toxin activity"/>
    <property type="evidence" value="ECO:0007669"/>
    <property type="project" value="UniProtKB-KW"/>
</dbReference>
<dbReference type="Gene3D" id="3.90.176.10">
    <property type="entry name" value="Toxin ADP-ribosyltransferase, Chain A, domain 1"/>
    <property type="match status" value="1"/>
</dbReference>
<dbReference type="InterPro" id="IPR000768">
    <property type="entry name" value="ART"/>
</dbReference>
<dbReference type="InterPro" id="IPR049195">
    <property type="entry name" value="Tre1-like_N"/>
</dbReference>
<dbReference type="Pfam" id="PF01129">
    <property type="entry name" value="ART"/>
    <property type="match status" value="1"/>
</dbReference>
<dbReference type="Pfam" id="PF21724">
    <property type="entry name" value="DUF6861"/>
    <property type="match status" value="1"/>
</dbReference>
<dbReference type="SUPFAM" id="SSF56399">
    <property type="entry name" value="ADP-ribosylation"/>
    <property type="match status" value="1"/>
</dbReference>
<dbReference type="PROSITE" id="PS51996">
    <property type="entry name" value="TR_MART"/>
    <property type="match status" value="1"/>
</dbReference>
<reference key="1">
    <citation type="submission" date="2008-01" db="EMBL/GenBank/DDBJ databases">
        <title>Complete sequence of Pseudomonas putida GB-1.</title>
        <authorList>
            <consortium name="US DOE Joint Genome Institute"/>
            <person name="Copeland A."/>
            <person name="Lucas S."/>
            <person name="Lapidus A."/>
            <person name="Barry K."/>
            <person name="Glavina del Rio T."/>
            <person name="Dalin E."/>
            <person name="Tice H."/>
            <person name="Pitluck S."/>
            <person name="Bruce D."/>
            <person name="Goodwin L."/>
            <person name="Chertkov O."/>
            <person name="Brettin T."/>
            <person name="Detter J.C."/>
            <person name="Han C."/>
            <person name="Kuske C.R."/>
            <person name="Schmutz J."/>
            <person name="Larimer F."/>
            <person name="Land M."/>
            <person name="Hauser L."/>
            <person name="Kyrpides N."/>
            <person name="Kim E."/>
            <person name="McCarthy J.K."/>
            <person name="Richardson P."/>
        </authorList>
    </citation>
    <scope>NUCLEOTIDE SEQUENCE [LARGE SCALE GENOMIC DNA]</scope>
    <source>
        <strain>GB-1</strain>
    </source>
</reference>
<reference key="2">
    <citation type="journal article" date="2018" name="Cell">
        <title>Bifunctional immunity proteins protect bacteria against FtsZ-targeting ADP-ribosylating toxins.</title>
        <authorList>
            <person name="Ting S.Y."/>
            <person name="Bosch D.E."/>
            <person name="Mangiameli S.M."/>
            <person name="Radey M.C."/>
            <person name="Huang S."/>
            <person name="Park Y.J."/>
            <person name="Kelly K.A."/>
            <person name="Filip S.K."/>
            <person name="Goo Y.A."/>
            <person name="Eng J.K."/>
            <person name="Allaire M."/>
            <person name="Veesler D."/>
            <person name="Wiggins P.A."/>
            <person name="Peterson S.B."/>
            <person name="Mougous J.D."/>
        </authorList>
    </citation>
    <scope>FUNCTION</scope>
    <scope>SUBSTRATE SPECIFICITY</scope>
    <source>
        <strain>GB-1</strain>
    </source>
</reference>
<sequence>MDLLANVPSWSDIERSLDQKFSAVNQSIHQGLQSANDSWHGFSRRVSDGAGQAYGYLGGHRIDNVQQALAMSYPIFQEDLKRKWASIGIEQILPVLLQLVKEVSMILGGSIAVGSAAGGAIGALAFGVGAAPGAVAGAGIGLEVGNLILLALGLSAIAEYFIKGLPVCLATLQEGIATAWNAEEGVKPAGLDPTGGSVAVIQERTERAARQLARGQEQLVLLLLMAIVTYLLRGQMKAGIMGSMENIATRSAKLQADIANKQFGAWLAKNEAKLLAHPDLQIKGPTPVKKPEPLQPARQPEKASAPKPVAKPAVMSLREAVGNQTADRWISTGRRIADFTDPKRSALLTDDQIGALHGYTTNEGYQWINPALRGQTPLSPQMEAFVTHANEGLAKLPSYTLGDTFRGTTLPEDVMSRMQVGLPTSDAAFLSTSADRALAFNGNVKMTLQGVTGKDISFLSGHREAEVLFGPGTRFNVVDRVDNGSVTQFILKEIP</sequence>
<keyword id="KW-0328">Glycosyltransferase</keyword>
<keyword id="KW-1035">Host cytoplasm</keyword>
<keyword id="KW-0548">Nucleotidyltransferase</keyword>
<keyword id="KW-0964">Secreted</keyword>
<keyword id="KW-0800">Toxin</keyword>
<keyword id="KW-0808">Transferase</keyword>
<keyword id="KW-0843">Virulence</keyword>
<proteinExistence type="inferred from homology"/>
<accession>B0KTG9</accession>
<organism>
    <name type="scientific">Pseudomonas putida (strain GB-1)</name>
    <dbReference type="NCBI Taxonomy" id="76869"/>
    <lineage>
        <taxon>Bacteria</taxon>
        <taxon>Pseudomonadati</taxon>
        <taxon>Pseudomonadota</taxon>
        <taxon>Gammaproteobacteria</taxon>
        <taxon>Pseudomonadales</taxon>
        <taxon>Pseudomonadaceae</taxon>
        <taxon>Pseudomonas</taxon>
    </lineage>
</organism>
<comment type="function">
    <text evidence="4">Toxic component of a contact-dependent interbacterial competition system (also called effector-immunity systems). Acts by ADP-ribosylating a number of target proteins in target cells; E.coli target proteins include FtsZ, EFTu, RNase E, Fis, YegQ, GuaB and IF2.</text>
</comment>
<comment type="catalytic activity">
    <reaction evidence="7">
        <text>L-arginyl-[protein] + NAD(+) = N(omega)-(ADP-D-ribosyl)-L-arginyl-[protein] + nicotinamide + H(+)</text>
        <dbReference type="Rhea" id="RHEA:19149"/>
        <dbReference type="Rhea" id="RHEA-COMP:10532"/>
        <dbReference type="Rhea" id="RHEA-COMP:15087"/>
        <dbReference type="ChEBI" id="CHEBI:15378"/>
        <dbReference type="ChEBI" id="CHEBI:17154"/>
        <dbReference type="ChEBI" id="CHEBI:29965"/>
        <dbReference type="ChEBI" id="CHEBI:57540"/>
        <dbReference type="ChEBI" id="CHEBI:142554"/>
        <dbReference type="EC" id="2.4.2.31"/>
    </reaction>
</comment>
<comment type="subcellular location">
    <subcellularLocation>
        <location evidence="6">Secreted</location>
    </subcellularLocation>
    <subcellularLocation>
        <location evidence="6">Host cytoplasm</location>
    </subcellularLocation>
    <text evidence="1">Probably delivered to target cells by a type 6 secretion system (T6SS).</text>
</comment>
<comment type="domain">
    <text evidence="4">The ART domain is toxic when expressed as a protein fragment.</text>
</comment>
<comment type="similarity">
    <text evidence="6">Belongs to the Arg-specific ADP-ribosyltransferase family.</text>
</comment>